<proteinExistence type="inferred from homology"/>
<accession>A7INA7</accession>
<reference key="1">
    <citation type="submission" date="2007-07" db="EMBL/GenBank/DDBJ databases">
        <title>Complete sequence of chromosome of Xanthobacter autotrophicus Py2.</title>
        <authorList>
            <consortium name="US DOE Joint Genome Institute"/>
            <person name="Copeland A."/>
            <person name="Lucas S."/>
            <person name="Lapidus A."/>
            <person name="Barry K."/>
            <person name="Glavina del Rio T."/>
            <person name="Hammon N."/>
            <person name="Israni S."/>
            <person name="Dalin E."/>
            <person name="Tice H."/>
            <person name="Pitluck S."/>
            <person name="Sims D."/>
            <person name="Brettin T."/>
            <person name="Bruce D."/>
            <person name="Detter J.C."/>
            <person name="Han C."/>
            <person name="Tapia R."/>
            <person name="Brainard J."/>
            <person name="Schmutz J."/>
            <person name="Larimer F."/>
            <person name="Land M."/>
            <person name="Hauser L."/>
            <person name="Kyrpides N."/>
            <person name="Kim E."/>
            <person name="Ensigns S.A."/>
            <person name="Richardson P."/>
        </authorList>
    </citation>
    <scope>NUCLEOTIDE SEQUENCE [LARGE SCALE GENOMIC DNA]</scope>
    <source>
        <strain>ATCC BAA-1158 / Py2</strain>
    </source>
</reference>
<gene>
    <name evidence="1" type="primary">ribH</name>
    <name type="ordered locus">Xaut_4280</name>
</gene>
<keyword id="KW-1185">Reference proteome</keyword>
<keyword id="KW-0686">Riboflavin biosynthesis</keyword>
<keyword id="KW-0808">Transferase</keyword>
<dbReference type="EC" id="2.5.1.78" evidence="1"/>
<dbReference type="EMBL" id="CP000781">
    <property type="protein sequence ID" value="ABS69501.1"/>
    <property type="molecule type" value="Genomic_DNA"/>
</dbReference>
<dbReference type="SMR" id="A7INA7"/>
<dbReference type="STRING" id="78245.Xaut_4280"/>
<dbReference type="KEGG" id="xau:Xaut_4280"/>
<dbReference type="eggNOG" id="COG0054">
    <property type="taxonomic scope" value="Bacteria"/>
</dbReference>
<dbReference type="HOGENOM" id="CLU_089358_1_2_5"/>
<dbReference type="OrthoDB" id="9809709at2"/>
<dbReference type="PhylomeDB" id="A7INA7"/>
<dbReference type="UniPathway" id="UPA00275">
    <property type="reaction ID" value="UER00404"/>
</dbReference>
<dbReference type="Proteomes" id="UP000002417">
    <property type="component" value="Chromosome"/>
</dbReference>
<dbReference type="GO" id="GO:0005829">
    <property type="term" value="C:cytosol"/>
    <property type="evidence" value="ECO:0007669"/>
    <property type="project" value="TreeGrafter"/>
</dbReference>
<dbReference type="GO" id="GO:0009349">
    <property type="term" value="C:riboflavin synthase complex"/>
    <property type="evidence" value="ECO:0007669"/>
    <property type="project" value="InterPro"/>
</dbReference>
<dbReference type="GO" id="GO:0000906">
    <property type="term" value="F:6,7-dimethyl-8-ribityllumazine synthase activity"/>
    <property type="evidence" value="ECO:0007669"/>
    <property type="project" value="UniProtKB-UniRule"/>
</dbReference>
<dbReference type="GO" id="GO:0009231">
    <property type="term" value="P:riboflavin biosynthetic process"/>
    <property type="evidence" value="ECO:0007669"/>
    <property type="project" value="UniProtKB-UniRule"/>
</dbReference>
<dbReference type="CDD" id="cd09209">
    <property type="entry name" value="Lumazine_synthase-I"/>
    <property type="match status" value="1"/>
</dbReference>
<dbReference type="Gene3D" id="3.40.50.960">
    <property type="entry name" value="Lumazine/riboflavin synthase"/>
    <property type="match status" value="1"/>
</dbReference>
<dbReference type="HAMAP" id="MF_00178">
    <property type="entry name" value="Lumazine_synth"/>
    <property type="match status" value="1"/>
</dbReference>
<dbReference type="InterPro" id="IPR034964">
    <property type="entry name" value="LS"/>
</dbReference>
<dbReference type="InterPro" id="IPR002180">
    <property type="entry name" value="LS/RS"/>
</dbReference>
<dbReference type="InterPro" id="IPR036467">
    <property type="entry name" value="LS/RS_sf"/>
</dbReference>
<dbReference type="NCBIfam" id="TIGR00114">
    <property type="entry name" value="lumazine-synth"/>
    <property type="match status" value="1"/>
</dbReference>
<dbReference type="PANTHER" id="PTHR21058:SF0">
    <property type="entry name" value="6,7-DIMETHYL-8-RIBITYLLUMAZINE SYNTHASE"/>
    <property type="match status" value="1"/>
</dbReference>
<dbReference type="PANTHER" id="PTHR21058">
    <property type="entry name" value="6,7-DIMETHYL-8-RIBITYLLUMAZINE SYNTHASE DMRL SYNTHASE LUMAZINE SYNTHASE"/>
    <property type="match status" value="1"/>
</dbReference>
<dbReference type="Pfam" id="PF00885">
    <property type="entry name" value="DMRL_synthase"/>
    <property type="match status" value="1"/>
</dbReference>
<dbReference type="SUPFAM" id="SSF52121">
    <property type="entry name" value="Lumazine synthase"/>
    <property type="match status" value="1"/>
</dbReference>
<sequence length="165" mass="17014">MVTTRKESAGDASLNAGLEGARVLIVEGRYYEALADELLAGARAVLEAAGVEVEVITVPGALEVPIAAEIALEAAEITGNAVDAVVGLGVVIRGETYHFEIVAGESARGLMDLGMAHALPVGNGILTVDTEAQAWERARVSEGNKGGGAAEAALTLLRLRRRLEA</sequence>
<feature type="chain" id="PRO_1000098252" description="6,7-dimethyl-8-ribityllumazine synthase">
    <location>
        <begin position="1"/>
        <end position="165"/>
    </location>
</feature>
<feature type="active site" description="Proton donor" evidence="1">
    <location>
        <position position="98"/>
    </location>
</feature>
<feature type="binding site" evidence="1">
    <location>
        <position position="30"/>
    </location>
    <ligand>
        <name>5-amino-6-(D-ribitylamino)uracil</name>
        <dbReference type="ChEBI" id="CHEBI:15934"/>
    </ligand>
</feature>
<feature type="binding site" evidence="1">
    <location>
        <begin position="61"/>
        <end position="63"/>
    </location>
    <ligand>
        <name>5-amino-6-(D-ribitylamino)uracil</name>
        <dbReference type="ChEBI" id="CHEBI:15934"/>
    </ligand>
</feature>
<feature type="binding site" evidence="1">
    <location>
        <begin position="90"/>
        <end position="92"/>
    </location>
    <ligand>
        <name>5-amino-6-(D-ribitylamino)uracil</name>
        <dbReference type="ChEBI" id="CHEBI:15934"/>
    </ligand>
</feature>
<feature type="binding site" evidence="1">
    <location>
        <begin position="95"/>
        <end position="96"/>
    </location>
    <ligand>
        <name>(2S)-2-hydroxy-3-oxobutyl phosphate</name>
        <dbReference type="ChEBI" id="CHEBI:58830"/>
    </ligand>
</feature>
<feature type="binding site" evidence="1">
    <location>
        <position position="123"/>
    </location>
    <ligand>
        <name>5-amino-6-(D-ribitylamino)uracil</name>
        <dbReference type="ChEBI" id="CHEBI:15934"/>
    </ligand>
</feature>
<feature type="binding site" evidence="1">
    <location>
        <position position="137"/>
    </location>
    <ligand>
        <name>(2S)-2-hydroxy-3-oxobutyl phosphate</name>
        <dbReference type="ChEBI" id="CHEBI:58830"/>
    </ligand>
</feature>
<evidence type="ECO:0000255" key="1">
    <source>
        <dbReference type="HAMAP-Rule" id="MF_00178"/>
    </source>
</evidence>
<protein>
    <recommendedName>
        <fullName evidence="1">6,7-dimethyl-8-ribityllumazine synthase</fullName>
        <shortName evidence="1">DMRL synthase</shortName>
        <shortName evidence="1">LS</shortName>
        <shortName evidence="1">Lumazine synthase</shortName>
        <ecNumber evidence="1">2.5.1.78</ecNumber>
    </recommendedName>
</protein>
<name>RISB_XANP2</name>
<comment type="function">
    <text evidence="1">Catalyzes the formation of 6,7-dimethyl-8-ribityllumazine by condensation of 5-amino-6-(D-ribitylamino)uracil with 3,4-dihydroxy-2-butanone 4-phosphate. This is the penultimate step in the biosynthesis of riboflavin.</text>
</comment>
<comment type="catalytic activity">
    <reaction evidence="1">
        <text>(2S)-2-hydroxy-3-oxobutyl phosphate + 5-amino-6-(D-ribitylamino)uracil = 6,7-dimethyl-8-(1-D-ribityl)lumazine + phosphate + 2 H2O + H(+)</text>
        <dbReference type="Rhea" id="RHEA:26152"/>
        <dbReference type="ChEBI" id="CHEBI:15377"/>
        <dbReference type="ChEBI" id="CHEBI:15378"/>
        <dbReference type="ChEBI" id="CHEBI:15934"/>
        <dbReference type="ChEBI" id="CHEBI:43474"/>
        <dbReference type="ChEBI" id="CHEBI:58201"/>
        <dbReference type="ChEBI" id="CHEBI:58830"/>
        <dbReference type="EC" id="2.5.1.78"/>
    </reaction>
</comment>
<comment type="pathway">
    <text evidence="1">Cofactor biosynthesis; riboflavin biosynthesis; riboflavin from 2-hydroxy-3-oxobutyl phosphate and 5-amino-6-(D-ribitylamino)uracil: step 1/2.</text>
</comment>
<comment type="similarity">
    <text evidence="1">Belongs to the DMRL synthase family.</text>
</comment>
<organism>
    <name type="scientific">Xanthobacter autotrophicus (strain ATCC BAA-1158 / Py2)</name>
    <dbReference type="NCBI Taxonomy" id="78245"/>
    <lineage>
        <taxon>Bacteria</taxon>
        <taxon>Pseudomonadati</taxon>
        <taxon>Pseudomonadota</taxon>
        <taxon>Alphaproteobacteria</taxon>
        <taxon>Hyphomicrobiales</taxon>
        <taxon>Xanthobacteraceae</taxon>
        <taxon>Xanthobacter</taxon>
    </lineage>
</organism>